<evidence type="ECO:0000255" key="1">
    <source>
        <dbReference type="HAMAP-Rule" id="MF_00508"/>
    </source>
</evidence>
<evidence type="ECO:0000305" key="2"/>
<dbReference type="EMBL" id="AL591688">
    <property type="protein sequence ID" value="CAC45934.1"/>
    <property type="molecule type" value="Genomic_DNA"/>
</dbReference>
<dbReference type="RefSeq" id="NP_385461.1">
    <property type="nucleotide sequence ID" value="NC_003047.1"/>
</dbReference>
<dbReference type="RefSeq" id="WP_003507767.1">
    <property type="nucleotide sequence ID" value="NC_003047.1"/>
</dbReference>
<dbReference type="SMR" id="Q92QH1"/>
<dbReference type="EnsemblBacteria" id="CAC45934">
    <property type="protein sequence ID" value="CAC45934"/>
    <property type="gene ID" value="SMc01310"/>
</dbReference>
<dbReference type="GeneID" id="97364694"/>
<dbReference type="KEGG" id="sme:SMc01310"/>
<dbReference type="PATRIC" id="fig|266834.11.peg.2771"/>
<dbReference type="eggNOG" id="COG0051">
    <property type="taxonomic scope" value="Bacteria"/>
</dbReference>
<dbReference type="HOGENOM" id="CLU_122625_1_3_5"/>
<dbReference type="OrthoDB" id="9804464at2"/>
<dbReference type="PRO" id="PR:Q92QH1"/>
<dbReference type="Proteomes" id="UP000001976">
    <property type="component" value="Chromosome"/>
</dbReference>
<dbReference type="GO" id="GO:1990904">
    <property type="term" value="C:ribonucleoprotein complex"/>
    <property type="evidence" value="ECO:0007669"/>
    <property type="project" value="UniProtKB-KW"/>
</dbReference>
<dbReference type="GO" id="GO:0005840">
    <property type="term" value="C:ribosome"/>
    <property type="evidence" value="ECO:0007669"/>
    <property type="project" value="UniProtKB-KW"/>
</dbReference>
<dbReference type="GO" id="GO:0003735">
    <property type="term" value="F:structural constituent of ribosome"/>
    <property type="evidence" value="ECO:0007669"/>
    <property type="project" value="InterPro"/>
</dbReference>
<dbReference type="GO" id="GO:0000049">
    <property type="term" value="F:tRNA binding"/>
    <property type="evidence" value="ECO:0007669"/>
    <property type="project" value="UniProtKB-UniRule"/>
</dbReference>
<dbReference type="GO" id="GO:0006412">
    <property type="term" value="P:translation"/>
    <property type="evidence" value="ECO:0007669"/>
    <property type="project" value="UniProtKB-UniRule"/>
</dbReference>
<dbReference type="FunFam" id="3.30.70.600:FF:000001">
    <property type="entry name" value="30S ribosomal protein S10"/>
    <property type="match status" value="1"/>
</dbReference>
<dbReference type="Gene3D" id="3.30.70.600">
    <property type="entry name" value="Ribosomal protein S10 domain"/>
    <property type="match status" value="1"/>
</dbReference>
<dbReference type="HAMAP" id="MF_00508">
    <property type="entry name" value="Ribosomal_uS10"/>
    <property type="match status" value="1"/>
</dbReference>
<dbReference type="InterPro" id="IPR001848">
    <property type="entry name" value="Ribosomal_uS10"/>
</dbReference>
<dbReference type="InterPro" id="IPR018268">
    <property type="entry name" value="Ribosomal_uS10_CS"/>
</dbReference>
<dbReference type="InterPro" id="IPR027486">
    <property type="entry name" value="Ribosomal_uS10_dom"/>
</dbReference>
<dbReference type="InterPro" id="IPR036838">
    <property type="entry name" value="Ribosomal_uS10_dom_sf"/>
</dbReference>
<dbReference type="NCBIfam" id="NF001861">
    <property type="entry name" value="PRK00596.1"/>
    <property type="match status" value="1"/>
</dbReference>
<dbReference type="NCBIfam" id="TIGR01049">
    <property type="entry name" value="rpsJ_bact"/>
    <property type="match status" value="1"/>
</dbReference>
<dbReference type="PANTHER" id="PTHR11700">
    <property type="entry name" value="30S RIBOSOMAL PROTEIN S10 FAMILY MEMBER"/>
    <property type="match status" value="1"/>
</dbReference>
<dbReference type="Pfam" id="PF00338">
    <property type="entry name" value="Ribosomal_S10"/>
    <property type="match status" value="1"/>
</dbReference>
<dbReference type="PRINTS" id="PR00971">
    <property type="entry name" value="RIBOSOMALS10"/>
</dbReference>
<dbReference type="SMART" id="SM01403">
    <property type="entry name" value="Ribosomal_S10"/>
    <property type="match status" value="1"/>
</dbReference>
<dbReference type="SUPFAM" id="SSF54999">
    <property type="entry name" value="Ribosomal protein S10"/>
    <property type="match status" value="1"/>
</dbReference>
<dbReference type="PROSITE" id="PS00361">
    <property type="entry name" value="RIBOSOMAL_S10"/>
    <property type="match status" value="1"/>
</dbReference>
<proteinExistence type="inferred from homology"/>
<organism>
    <name type="scientific">Rhizobium meliloti (strain 1021)</name>
    <name type="common">Ensifer meliloti</name>
    <name type="synonym">Sinorhizobium meliloti</name>
    <dbReference type="NCBI Taxonomy" id="266834"/>
    <lineage>
        <taxon>Bacteria</taxon>
        <taxon>Pseudomonadati</taxon>
        <taxon>Pseudomonadota</taxon>
        <taxon>Alphaproteobacteria</taxon>
        <taxon>Hyphomicrobiales</taxon>
        <taxon>Rhizobiaceae</taxon>
        <taxon>Sinorhizobium/Ensifer group</taxon>
        <taxon>Sinorhizobium</taxon>
    </lineage>
</organism>
<protein>
    <recommendedName>
        <fullName evidence="1">Small ribosomal subunit protein uS10</fullName>
    </recommendedName>
    <alternativeName>
        <fullName evidence="2">30S ribosomal protein S10</fullName>
    </alternativeName>
</protein>
<keyword id="KW-1185">Reference proteome</keyword>
<keyword id="KW-0687">Ribonucleoprotein</keyword>
<keyword id="KW-0689">Ribosomal protein</keyword>
<comment type="function">
    <text evidence="1">Involved in the binding of tRNA to the ribosomes.</text>
</comment>
<comment type="subunit">
    <text evidence="1">Part of the 30S ribosomal subunit.</text>
</comment>
<comment type="similarity">
    <text evidence="1">Belongs to the universal ribosomal protein uS10 family.</text>
</comment>
<name>RS10_RHIME</name>
<feature type="chain" id="PRO_0000146583" description="Small ribosomal subunit protein uS10">
    <location>
        <begin position="1"/>
        <end position="102"/>
    </location>
</feature>
<accession>Q92QH1</accession>
<gene>
    <name evidence="1" type="primary">rpsJ</name>
    <name type="ordered locus">R01355</name>
    <name type="ORF">SMc01310</name>
</gene>
<sequence length="102" mass="11556">MNGQNIRIRLKAFDHRILDASTREIVSTAKRTGASVRGPVPLPTRIEKFTVNRSPHVDKKSREQFEMRTHKRLLDIVDPTPQTVDALMKLDLAAGVDVEIKL</sequence>
<reference key="1">
    <citation type="journal article" date="2001" name="Proc. Natl. Acad. Sci. U.S.A.">
        <title>Analysis of the chromosome sequence of the legume symbiont Sinorhizobium meliloti strain 1021.</title>
        <authorList>
            <person name="Capela D."/>
            <person name="Barloy-Hubler F."/>
            <person name="Gouzy J."/>
            <person name="Bothe G."/>
            <person name="Ampe F."/>
            <person name="Batut J."/>
            <person name="Boistard P."/>
            <person name="Becker A."/>
            <person name="Boutry M."/>
            <person name="Cadieu E."/>
            <person name="Dreano S."/>
            <person name="Gloux S."/>
            <person name="Godrie T."/>
            <person name="Goffeau A."/>
            <person name="Kahn D."/>
            <person name="Kiss E."/>
            <person name="Lelaure V."/>
            <person name="Masuy D."/>
            <person name="Pohl T."/>
            <person name="Portetelle D."/>
            <person name="Puehler A."/>
            <person name="Purnelle B."/>
            <person name="Ramsperger U."/>
            <person name="Renard C."/>
            <person name="Thebault P."/>
            <person name="Vandenbol M."/>
            <person name="Weidner S."/>
            <person name="Galibert F."/>
        </authorList>
    </citation>
    <scope>NUCLEOTIDE SEQUENCE [LARGE SCALE GENOMIC DNA]</scope>
    <source>
        <strain>1021</strain>
    </source>
</reference>
<reference key="2">
    <citation type="journal article" date="2001" name="Science">
        <title>The composite genome of the legume symbiont Sinorhizobium meliloti.</title>
        <authorList>
            <person name="Galibert F."/>
            <person name="Finan T.M."/>
            <person name="Long S.R."/>
            <person name="Puehler A."/>
            <person name="Abola P."/>
            <person name="Ampe F."/>
            <person name="Barloy-Hubler F."/>
            <person name="Barnett M.J."/>
            <person name="Becker A."/>
            <person name="Boistard P."/>
            <person name="Bothe G."/>
            <person name="Boutry M."/>
            <person name="Bowser L."/>
            <person name="Buhrmester J."/>
            <person name="Cadieu E."/>
            <person name="Capela D."/>
            <person name="Chain P."/>
            <person name="Cowie A."/>
            <person name="Davis R.W."/>
            <person name="Dreano S."/>
            <person name="Federspiel N.A."/>
            <person name="Fisher R.F."/>
            <person name="Gloux S."/>
            <person name="Godrie T."/>
            <person name="Goffeau A."/>
            <person name="Golding B."/>
            <person name="Gouzy J."/>
            <person name="Gurjal M."/>
            <person name="Hernandez-Lucas I."/>
            <person name="Hong A."/>
            <person name="Huizar L."/>
            <person name="Hyman R.W."/>
            <person name="Jones T."/>
            <person name="Kahn D."/>
            <person name="Kahn M.L."/>
            <person name="Kalman S."/>
            <person name="Keating D.H."/>
            <person name="Kiss E."/>
            <person name="Komp C."/>
            <person name="Lelaure V."/>
            <person name="Masuy D."/>
            <person name="Palm C."/>
            <person name="Peck M.C."/>
            <person name="Pohl T.M."/>
            <person name="Portetelle D."/>
            <person name="Purnelle B."/>
            <person name="Ramsperger U."/>
            <person name="Surzycki R."/>
            <person name="Thebault P."/>
            <person name="Vandenbol M."/>
            <person name="Vorhoelter F.J."/>
            <person name="Weidner S."/>
            <person name="Wells D.H."/>
            <person name="Wong K."/>
            <person name="Yeh K.-C."/>
            <person name="Batut J."/>
        </authorList>
    </citation>
    <scope>NUCLEOTIDE SEQUENCE [LARGE SCALE GENOMIC DNA]</scope>
    <source>
        <strain>1021</strain>
    </source>
</reference>